<gene>
    <name evidence="1" type="primary">hisB</name>
    <name type="ordered locus">LBJ_0101</name>
</gene>
<keyword id="KW-0028">Amino-acid biosynthesis</keyword>
<keyword id="KW-0963">Cytoplasm</keyword>
<keyword id="KW-0368">Histidine biosynthesis</keyword>
<keyword id="KW-0456">Lyase</keyword>
<reference key="1">
    <citation type="journal article" date="2006" name="Proc. Natl. Acad. Sci. U.S.A.">
        <title>Genome reduction in Leptospira borgpetersenii reflects limited transmission potential.</title>
        <authorList>
            <person name="Bulach D.M."/>
            <person name="Zuerner R.L."/>
            <person name="Wilson P."/>
            <person name="Seemann T."/>
            <person name="McGrath A."/>
            <person name="Cullen P.A."/>
            <person name="Davis J."/>
            <person name="Johnson M."/>
            <person name="Kuczek E."/>
            <person name="Alt D.P."/>
            <person name="Peterson-Burch B."/>
            <person name="Coppel R.L."/>
            <person name="Rood J.I."/>
            <person name="Davies J.K."/>
            <person name="Adler B."/>
        </authorList>
    </citation>
    <scope>NUCLEOTIDE SEQUENCE [LARGE SCALE GENOMIC DNA]</scope>
    <source>
        <strain>JB197</strain>
    </source>
</reference>
<proteinExistence type="inferred from homology"/>
<evidence type="ECO:0000255" key="1">
    <source>
        <dbReference type="HAMAP-Rule" id="MF_00076"/>
    </source>
</evidence>
<sequence length="206" mass="23423">MTRRLIRFYDPVRMKAERKTSETEIKLEMNLHGTGQYRFDTEIPFFEHMLSHISKHGLIDLNLWLRGDIEIDCHHSVEDTAILMGTTIHKQLGDKAGIFRYGHFTLTMDEVLTTVAVDLGGRYFFKYTGPELTGKFGIYDAELSLEFLQKLALNAKMNLHVFVHYGDNKHHVHESIFKALGKALRMAIAQDSATAGAIPSTKGVLE</sequence>
<dbReference type="EC" id="4.2.1.19" evidence="1"/>
<dbReference type="EMBL" id="CP000350">
    <property type="protein sequence ID" value="ABJ74846.1"/>
    <property type="molecule type" value="Genomic_DNA"/>
</dbReference>
<dbReference type="SMR" id="Q04W74"/>
<dbReference type="KEGG" id="lbj:LBJ_0101"/>
<dbReference type="HOGENOM" id="CLU_044308_3_0_12"/>
<dbReference type="UniPathway" id="UPA00031">
    <property type="reaction ID" value="UER00011"/>
</dbReference>
<dbReference type="Proteomes" id="UP000000656">
    <property type="component" value="Chromosome 1"/>
</dbReference>
<dbReference type="GO" id="GO:0005737">
    <property type="term" value="C:cytoplasm"/>
    <property type="evidence" value="ECO:0007669"/>
    <property type="project" value="UniProtKB-SubCell"/>
</dbReference>
<dbReference type="GO" id="GO:0004424">
    <property type="term" value="F:imidazoleglycerol-phosphate dehydratase activity"/>
    <property type="evidence" value="ECO:0007669"/>
    <property type="project" value="UniProtKB-UniRule"/>
</dbReference>
<dbReference type="GO" id="GO:0000105">
    <property type="term" value="P:L-histidine biosynthetic process"/>
    <property type="evidence" value="ECO:0007669"/>
    <property type="project" value="UniProtKB-UniRule"/>
</dbReference>
<dbReference type="CDD" id="cd07914">
    <property type="entry name" value="IGPD"/>
    <property type="match status" value="1"/>
</dbReference>
<dbReference type="FunFam" id="3.30.230.40:FF:000001">
    <property type="entry name" value="Imidazoleglycerol-phosphate dehydratase HisB"/>
    <property type="match status" value="1"/>
</dbReference>
<dbReference type="FunFam" id="3.30.230.40:FF:000003">
    <property type="entry name" value="Imidazoleglycerol-phosphate dehydratase HisB"/>
    <property type="match status" value="1"/>
</dbReference>
<dbReference type="Gene3D" id="3.30.230.40">
    <property type="entry name" value="Imidazole glycerol phosphate dehydratase, domain 1"/>
    <property type="match status" value="2"/>
</dbReference>
<dbReference type="HAMAP" id="MF_00076">
    <property type="entry name" value="HisB"/>
    <property type="match status" value="1"/>
</dbReference>
<dbReference type="InterPro" id="IPR038494">
    <property type="entry name" value="IGPD_sf"/>
</dbReference>
<dbReference type="InterPro" id="IPR000807">
    <property type="entry name" value="ImidazoleglycerolP_deHydtase"/>
</dbReference>
<dbReference type="InterPro" id="IPR020565">
    <property type="entry name" value="ImidazoleglycerP_deHydtase_CS"/>
</dbReference>
<dbReference type="InterPro" id="IPR020568">
    <property type="entry name" value="Ribosomal_Su5_D2-typ_SF"/>
</dbReference>
<dbReference type="NCBIfam" id="NF002114">
    <property type="entry name" value="PRK00951.2-4"/>
    <property type="match status" value="1"/>
</dbReference>
<dbReference type="PANTHER" id="PTHR23133:SF2">
    <property type="entry name" value="IMIDAZOLEGLYCEROL-PHOSPHATE DEHYDRATASE"/>
    <property type="match status" value="1"/>
</dbReference>
<dbReference type="PANTHER" id="PTHR23133">
    <property type="entry name" value="IMIDAZOLEGLYCEROL-PHOSPHATE DEHYDRATASE HIS7"/>
    <property type="match status" value="1"/>
</dbReference>
<dbReference type="Pfam" id="PF00475">
    <property type="entry name" value="IGPD"/>
    <property type="match status" value="1"/>
</dbReference>
<dbReference type="SUPFAM" id="SSF54211">
    <property type="entry name" value="Ribosomal protein S5 domain 2-like"/>
    <property type="match status" value="2"/>
</dbReference>
<dbReference type="PROSITE" id="PS00954">
    <property type="entry name" value="IGP_DEHYDRATASE_1"/>
    <property type="match status" value="1"/>
</dbReference>
<dbReference type="PROSITE" id="PS00955">
    <property type="entry name" value="IGP_DEHYDRATASE_2"/>
    <property type="match status" value="1"/>
</dbReference>
<protein>
    <recommendedName>
        <fullName evidence="1">Imidazoleglycerol-phosphate dehydratase</fullName>
        <shortName evidence="1">IGPD</shortName>
        <ecNumber evidence="1">4.2.1.19</ecNumber>
    </recommendedName>
</protein>
<name>HIS7_LEPBJ</name>
<comment type="catalytic activity">
    <reaction evidence="1">
        <text>D-erythro-1-(imidazol-4-yl)glycerol 3-phosphate = 3-(imidazol-4-yl)-2-oxopropyl phosphate + H2O</text>
        <dbReference type="Rhea" id="RHEA:11040"/>
        <dbReference type="ChEBI" id="CHEBI:15377"/>
        <dbReference type="ChEBI" id="CHEBI:57766"/>
        <dbReference type="ChEBI" id="CHEBI:58278"/>
        <dbReference type="EC" id="4.2.1.19"/>
    </reaction>
</comment>
<comment type="pathway">
    <text evidence="1">Amino-acid biosynthesis; L-histidine biosynthesis; L-histidine from 5-phospho-alpha-D-ribose 1-diphosphate: step 6/9.</text>
</comment>
<comment type="subcellular location">
    <subcellularLocation>
        <location evidence="1">Cytoplasm</location>
    </subcellularLocation>
</comment>
<comment type="similarity">
    <text evidence="1">Belongs to the imidazoleglycerol-phosphate dehydratase family.</text>
</comment>
<accession>Q04W74</accession>
<organism>
    <name type="scientific">Leptospira borgpetersenii serovar Hardjo-bovis (strain JB197)</name>
    <dbReference type="NCBI Taxonomy" id="355277"/>
    <lineage>
        <taxon>Bacteria</taxon>
        <taxon>Pseudomonadati</taxon>
        <taxon>Spirochaetota</taxon>
        <taxon>Spirochaetia</taxon>
        <taxon>Leptospirales</taxon>
        <taxon>Leptospiraceae</taxon>
        <taxon>Leptospira</taxon>
    </lineage>
</organism>
<feature type="chain" id="PRO_1000010287" description="Imidazoleglycerol-phosphate dehydratase">
    <location>
        <begin position="1"/>
        <end position="206"/>
    </location>
</feature>